<feature type="chain" id="PRO_1000074295" description="Probable tRNA sulfurtransferase">
    <location>
        <begin position="1"/>
        <end position="404"/>
    </location>
</feature>
<feature type="domain" description="THUMP" evidence="1">
    <location>
        <begin position="60"/>
        <end position="165"/>
    </location>
</feature>
<feature type="binding site" evidence="1">
    <location>
        <begin position="183"/>
        <end position="184"/>
    </location>
    <ligand>
        <name>ATP</name>
        <dbReference type="ChEBI" id="CHEBI:30616"/>
    </ligand>
</feature>
<feature type="binding site" evidence="1">
    <location>
        <begin position="208"/>
        <end position="209"/>
    </location>
    <ligand>
        <name>ATP</name>
        <dbReference type="ChEBI" id="CHEBI:30616"/>
    </ligand>
</feature>
<feature type="binding site" evidence="1">
    <location>
        <position position="265"/>
    </location>
    <ligand>
        <name>ATP</name>
        <dbReference type="ChEBI" id="CHEBI:30616"/>
    </ligand>
</feature>
<feature type="binding site" evidence="1">
    <location>
        <position position="287"/>
    </location>
    <ligand>
        <name>ATP</name>
        <dbReference type="ChEBI" id="CHEBI:30616"/>
    </ligand>
</feature>
<feature type="binding site" evidence="1">
    <location>
        <position position="296"/>
    </location>
    <ligand>
        <name>ATP</name>
        <dbReference type="ChEBI" id="CHEBI:30616"/>
    </ligand>
</feature>
<dbReference type="EC" id="2.8.1.4" evidence="1"/>
<dbReference type="EMBL" id="CP000261">
    <property type="protein sequence ID" value="ABF35748.1"/>
    <property type="molecule type" value="Genomic_DNA"/>
</dbReference>
<dbReference type="SMR" id="Q1JCG0"/>
<dbReference type="KEGG" id="spj:MGAS2096_Spy0696"/>
<dbReference type="HOGENOM" id="CLU_037952_4_0_9"/>
<dbReference type="UniPathway" id="UPA00060"/>
<dbReference type="GO" id="GO:0005829">
    <property type="term" value="C:cytosol"/>
    <property type="evidence" value="ECO:0007669"/>
    <property type="project" value="TreeGrafter"/>
</dbReference>
<dbReference type="GO" id="GO:0005524">
    <property type="term" value="F:ATP binding"/>
    <property type="evidence" value="ECO:0007669"/>
    <property type="project" value="UniProtKB-UniRule"/>
</dbReference>
<dbReference type="GO" id="GO:0004810">
    <property type="term" value="F:CCA tRNA nucleotidyltransferase activity"/>
    <property type="evidence" value="ECO:0007669"/>
    <property type="project" value="InterPro"/>
</dbReference>
<dbReference type="GO" id="GO:0000049">
    <property type="term" value="F:tRNA binding"/>
    <property type="evidence" value="ECO:0007669"/>
    <property type="project" value="UniProtKB-UniRule"/>
</dbReference>
<dbReference type="GO" id="GO:0140741">
    <property type="term" value="F:tRNA-uracil-4 sulfurtransferase activity"/>
    <property type="evidence" value="ECO:0007669"/>
    <property type="project" value="UniProtKB-EC"/>
</dbReference>
<dbReference type="GO" id="GO:0009228">
    <property type="term" value="P:thiamine biosynthetic process"/>
    <property type="evidence" value="ECO:0007669"/>
    <property type="project" value="UniProtKB-KW"/>
</dbReference>
<dbReference type="GO" id="GO:0009229">
    <property type="term" value="P:thiamine diphosphate biosynthetic process"/>
    <property type="evidence" value="ECO:0007669"/>
    <property type="project" value="UniProtKB-UniRule"/>
</dbReference>
<dbReference type="GO" id="GO:0052837">
    <property type="term" value="P:thiazole biosynthetic process"/>
    <property type="evidence" value="ECO:0007669"/>
    <property type="project" value="TreeGrafter"/>
</dbReference>
<dbReference type="GO" id="GO:0002937">
    <property type="term" value="P:tRNA 4-thiouridine biosynthesis"/>
    <property type="evidence" value="ECO:0007669"/>
    <property type="project" value="TreeGrafter"/>
</dbReference>
<dbReference type="CDD" id="cd01712">
    <property type="entry name" value="PPase_ThiI"/>
    <property type="match status" value="1"/>
</dbReference>
<dbReference type="CDD" id="cd11716">
    <property type="entry name" value="THUMP_ThiI"/>
    <property type="match status" value="1"/>
</dbReference>
<dbReference type="FunFam" id="3.40.50.620:FF:000053">
    <property type="entry name" value="Probable tRNA sulfurtransferase"/>
    <property type="match status" value="1"/>
</dbReference>
<dbReference type="Gene3D" id="3.30.2130.30">
    <property type="match status" value="1"/>
</dbReference>
<dbReference type="Gene3D" id="3.40.50.620">
    <property type="entry name" value="HUPs"/>
    <property type="match status" value="1"/>
</dbReference>
<dbReference type="HAMAP" id="MF_00021">
    <property type="entry name" value="ThiI"/>
    <property type="match status" value="1"/>
</dbReference>
<dbReference type="InterPro" id="IPR014729">
    <property type="entry name" value="Rossmann-like_a/b/a_fold"/>
</dbReference>
<dbReference type="InterPro" id="IPR020536">
    <property type="entry name" value="ThiI_AANH"/>
</dbReference>
<dbReference type="InterPro" id="IPR054173">
    <property type="entry name" value="ThiI_fer"/>
</dbReference>
<dbReference type="InterPro" id="IPR049961">
    <property type="entry name" value="ThiI_N"/>
</dbReference>
<dbReference type="InterPro" id="IPR004114">
    <property type="entry name" value="THUMP_dom"/>
</dbReference>
<dbReference type="InterPro" id="IPR049962">
    <property type="entry name" value="THUMP_ThiI"/>
</dbReference>
<dbReference type="InterPro" id="IPR003720">
    <property type="entry name" value="tRNA_STrfase"/>
</dbReference>
<dbReference type="InterPro" id="IPR050102">
    <property type="entry name" value="tRNA_sulfurtransferase_ThiI"/>
</dbReference>
<dbReference type="NCBIfam" id="TIGR00342">
    <property type="entry name" value="tRNA uracil 4-sulfurtransferase ThiI"/>
    <property type="match status" value="1"/>
</dbReference>
<dbReference type="PANTHER" id="PTHR43209">
    <property type="entry name" value="TRNA SULFURTRANSFERASE"/>
    <property type="match status" value="1"/>
</dbReference>
<dbReference type="PANTHER" id="PTHR43209:SF1">
    <property type="entry name" value="TRNA SULFURTRANSFERASE"/>
    <property type="match status" value="1"/>
</dbReference>
<dbReference type="Pfam" id="PF02568">
    <property type="entry name" value="ThiI"/>
    <property type="match status" value="1"/>
</dbReference>
<dbReference type="Pfam" id="PF22025">
    <property type="entry name" value="ThiI_fer"/>
    <property type="match status" value="1"/>
</dbReference>
<dbReference type="Pfam" id="PF02926">
    <property type="entry name" value="THUMP"/>
    <property type="match status" value="1"/>
</dbReference>
<dbReference type="SMART" id="SM00981">
    <property type="entry name" value="THUMP"/>
    <property type="match status" value="1"/>
</dbReference>
<dbReference type="SUPFAM" id="SSF52402">
    <property type="entry name" value="Adenine nucleotide alpha hydrolases-like"/>
    <property type="match status" value="1"/>
</dbReference>
<dbReference type="SUPFAM" id="SSF143437">
    <property type="entry name" value="THUMP domain-like"/>
    <property type="match status" value="1"/>
</dbReference>
<dbReference type="PROSITE" id="PS51165">
    <property type="entry name" value="THUMP"/>
    <property type="match status" value="1"/>
</dbReference>
<proteinExistence type="inferred from homology"/>
<name>THII_STRPB</name>
<comment type="function">
    <text evidence="1">Catalyzes the ATP-dependent transfer of a sulfur to tRNA to produce 4-thiouridine in position 8 of tRNAs, which functions as a near-UV photosensor. Also catalyzes the transfer of sulfur to the sulfur carrier protein ThiS, forming ThiS-thiocarboxylate. This is a step in the synthesis of thiazole, in the thiamine biosynthesis pathway. The sulfur is donated as persulfide by IscS.</text>
</comment>
<comment type="catalytic activity">
    <reaction evidence="1">
        <text>[ThiI sulfur-carrier protein]-S-sulfanyl-L-cysteine + a uridine in tRNA + 2 reduced [2Fe-2S]-[ferredoxin] + ATP + H(+) = [ThiI sulfur-carrier protein]-L-cysteine + a 4-thiouridine in tRNA + 2 oxidized [2Fe-2S]-[ferredoxin] + AMP + diphosphate</text>
        <dbReference type="Rhea" id="RHEA:24176"/>
        <dbReference type="Rhea" id="RHEA-COMP:10000"/>
        <dbReference type="Rhea" id="RHEA-COMP:10001"/>
        <dbReference type="Rhea" id="RHEA-COMP:13337"/>
        <dbReference type="Rhea" id="RHEA-COMP:13338"/>
        <dbReference type="Rhea" id="RHEA-COMP:13339"/>
        <dbReference type="Rhea" id="RHEA-COMP:13340"/>
        <dbReference type="ChEBI" id="CHEBI:15378"/>
        <dbReference type="ChEBI" id="CHEBI:29950"/>
        <dbReference type="ChEBI" id="CHEBI:30616"/>
        <dbReference type="ChEBI" id="CHEBI:33019"/>
        <dbReference type="ChEBI" id="CHEBI:33737"/>
        <dbReference type="ChEBI" id="CHEBI:33738"/>
        <dbReference type="ChEBI" id="CHEBI:61963"/>
        <dbReference type="ChEBI" id="CHEBI:65315"/>
        <dbReference type="ChEBI" id="CHEBI:136798"/>
        <dbReference type="ChEBI" id="CHEBI:456215"/>
        <dbReference type="EC" id="2.8.1.4"/>
    </reaction>
</comment>
<comment type="catalytic activity">
    <reaction evidence="1">
        <text>[ThiS sulfur-carrier protein]-C-terminal Gly-Gly-AMP + S-sulfanyl-L-cysteinyl-[cysteine desulfurase] + AH2 = [ThiS sulfur-carrier protein]-C-terminal-Gly-aminoethanethioate + L-cysteinyl-[cysteine desulfurase] + A + AMP + 2 H(+)</text>
        <dbReference type="Rhea" id="RHEA:43340"/>
        <dbReference type="Rhea" id="RHEA-COMP:12157"/>
        <dbReference type="Rhea" id="RHEA-COMP:12158"/>
        <dbReference type="Rhea" id="RHEA-COMP:12910"/>
        <dbReference type="Rhea" id="RHEA-COMP:19908"/>
        <dbReference type="ChEBI" id="CHEBI:13193"/>
        <dbReference type="ChEBI" id="CHEBI:15378"/>
        <dbReference type="ChEBI" id="CHEBI:17499"/>
        <dbReference type="ChEBI" id="CHEBI:29950"/>
        <dbReference type="ChEBI" id="CHEBI:61963"/>
        <dbReference type="ChEBI" id="CHEBI:90618"/>
        <dbReference type="ChEBI" id="CHEBI:232372"/>
        <dbReference type="ChEBI" id="CHEBI:456215"/>
    </reaction>
</comment>
<comment type="pathway">
    <text evidence="1">Cofactor biosynthesis; thiamine diphosphate biosynthesis.</text>
</comment>
<comment type="subcellular location">
    <subcellularLocation>
        <location evidence="1">Cytoplasm</location>
    </subcellularLocation>
</comment>
<comment type="similarity">
    <text evidence="1">Belongs to the ThiI family.</text>
</comment>
<protein>
    <recommendedName>
        <fullName evidence="1">Probable tRNA sulfurtransferase</fullName>
        <ecNumber evidence="1">2.8.1.4</ecNumber>
    </recommendedName>
    <alternativeName>
        <fullName evidence="1">Sulfur carrier protein ThiS sulfurtransferase</fullName>
    </alternativeName>
    <alternativeName>
        <fullName evidence="1">Thiamine biosynthesis protein ThiI</fullName>
    </alternativeName>
    <alternativeName>
        <fullName evidence="1">tRNA 4-thiouridine synthase</fullName>
    </alternativeName>
</protein>
<organism>
    <name type="scientific">Streptococcus pyogenes serotype M12 (strain MGAS2096)</name>
    <dbReference type="NCBI Taxonomy" id="370553"/>
    <lineage>
        <taxon>Bacteria</taxon>
        <taxon>Bacillati</taxon>
        <taxon>Bacillota</taxon>
        <taxon>Bacilli</taxon>
        <taxon>Lactobacillales</taxon>
        <taxon>Streptococcaceae</taxon>
        <taxon>Streptococcus</taxon>
    </lineage>
</organism>
<reference key="1">
    <citation type="journal article" date="2006" name="Proc. Natl. Acad. Sci. U.S.A.">
        <title>Molecular genetic anatomy of inter- and intraserotype variation in the human bacterial pathogen group A Streptococcus.</title>
        <authorList>
            <person name="Beres S.B."/>
            <person name="Richter E.W."/>
            <person name="Nagiec M.J."/>
            <person name="Sumby P."/>
            <person name="Porcella S.F."/>
            <person name="DeLeo F.R."/>
            <person name="Musser J.M."/>
        </authorList>
    </citation>
    <scope>NUCLEOTIDE SEQUENCE [LARGE SCALE GENOMIC DNA]</scope>
    <source>
        <strain>MGAS2096</strain>
    </source>
</reference>
<accession>Q1JCG0</accession>
<evidence type="ECO:0000255" key="1">
    <source>
        <dbReference type="HAMAP-Rule" id="MF_00021"/>
    </source>
</evidence>
<gene>
    <name evidence="1" type="primary">thiI</name>
    <name type="ordered locus">MGAS2096_Spy0696</name>
</gene>
<keyword id="KW-0067">ATP-binding</keyword>
<keyword id="KW-0963">Cytoplasm</keyword>
<keyword id="KW-0547">Nucleotide-binding</keyword>
<keyword id="KW-0694">RNA-binding</keyword>
<keyword id="KW-0784">Thiamine biosynthesis</keyword>
<keyword id="KW-0808">Transferase</keyword>
<keyword id="KW-0820">tRNA-binding</keyword>
<sequence length="404" mass="44754">MDYSEIMVRHGELSTKGKNRMRFINKLKNNIQDVLAPFPAIAVRSDRDRTHVSLNGTDYQPIVEALKLVFGVQALSPVYKLEKSVPLLVTAVQDIMTSLYRDGLTFKIATKRSDHAFELDSRELNSLLGGAVFEVLPNIQAQMKHPDVTLKVEIRDEAAYISYEEIKGAGGLPVGTSGKGMLMLSGGIDSPVAGYLALKRGLDIEVVHFASPPYTSPGALAKAQDLTRRLTRFGGNIQFIEVPFTEIQEEIKNKAPEAYLMTLTRRFMMRITDAIREQRKGLVIVNGESLGQVASQTLESMQAINAVTSTPIIRPVVTMDKLEIIEMAQAIDTFDISIQPFEDCCTIFAPDRPKTNPKLGNAEKYEERFDIDGLVQRAVSGIVVTEITPEIVNDEVENLIDALL</sequence>